<feature type="chain" id="PRO_0000149547" description="Non-structural protein 2">
    <location>
        <begin position="1"/>
        <end position="317"/>
    </location>
</feature>
<feature type="region of interest" description="RNA-binding" evidence="1">
    <location>
        <begin position="205"/>
        <end position="241"/>
    </location>
</feature>
<feature type="active site" description="For NTPase and RTPase activities" evidence="1">
    <location>
        <position position="225"/>
    </location>
</feature>
<feature type="binding site" evidence="1">
    <location>
        <begin position="107"/>
        <end position="109"/>
    </location>
    <ligand>
        <name>ATP</name>
        <dbReference type="ChEBI" id="CHEBI:30616"/>
    </ligand>
</feature>
<feature type="binding site" evidence="1">
    <location>
        <position position="188"/>
    </location>
    <ligand>
        <name>ATP</name>
        <dbReference type="ChEBI" id="CHEBI:30616"/>
    </ligand>
</feature>
<feature type="binding site" evidence="1">
    <location>
        <begin position="221"/>
        <end position="223"/>
    </location>
    <ligand>
        <name>ATP</name>
        <dbReference type="ChEBI" id="CHEBI:30616"/>
    </ligand>
</feature>
<feature type="binding site" evidence="1">
    <location>
        <position position="227"/>
    </location>
    <ligand>
        <name>ATP</name>
        <dbReference type="ChEBI" id="CHEBI:30616"/>
    </ligand>
</feature>
<feature type="sequence conflict" description="In Ref. 2; ABV53255." ref="2">
    <original>G</original>
    <variation>D</variation>
    <location>
        <position position="194"/>
    </location>
</feature>
<reference key="1">
    <citation type="journal article" date="1993" name="Virology">
        <title>Nucleotide and amino acid sequence analysis of the rotavirus nonstructural RNA-binding protein NS35.</title>
        <authorList>
            <person name="Patton J.T."/>
            <person name="Salter-Cid L."/>
            <person name="Kalbach A.N."/>
            <person name="Mansell E.A."/>
            <person name="Kattoura M.D."/>
        </authorList>
    </citation>
    <scope>NUCLEOTIDE SEQUENCE [GENOMIC RNA]</scope>
</reference>
<reference key="2">
    <citation type="journal article" date="2008" name="J. Virol.">
        <title>Group A human rotavirus genomics: evidence that gene constellations are influenced by viral protein interactions.</title>
        <authorList>
            <person name="Heiman E.M."/>
            <person name="McDonald S.M."/>
            <person name="Barro M."/>
            <person name="Taraporewala Z.F."/>
            <person name="Bar-Magen T."/>
            <person name="Patton J.T."/>
        </authorList>
    </citation>
    <scope>NUCLEOTIDE SEQUENCE [GENOMIC RNA]</scope>
</reference>
<sequence>MAELACFCYPHLENDSYKFIPFNNLAIKCMLTAKVDKKDQDKFYNSIIYGIAPPPQFKKRYNTNDNSRGMNYETSMFNKVAALICEALNSTKVTQSDIASVLSRVVSVRHLENLVLRRENHQDVLFHSKELLLKSVLIAIGHSKEIETTATAEGGEIVFQNTAFTMWRLTYLEHKLMPILDPNFIEYKITVNEGKPISESHIKELIAELRWQYNKFAVITHGKGHYRVVKYSSVANHADRVYATYKSNNKNGNMLEFNLLDQRIIWQNWYAFTSSMKQGNTLDTCKKLLFQKIKRESNPFKGLSTDRKMDEVSQIGI</sequence>
<organism>
    <name type="scientific">Rotavirus A (strain RVA/Human/United States/DS-1/1976/G2P1B[4])</name>
    <name type="common">RV-A</name>
    <name type="synonym">Rotavirus A (strain DS1)</name>
    <dbReference type="NCBI Taxonomy" id="10950"/>
    <lineage>
        <taxon>Viruses</taxon>
        <taxon>Riboviria</taxon>
        <taxon>Orthornavirae</taxon>
        <taxon>Duplornaviricota</taxon>
        <taxon>Resentoviricetes</taxon>
        <taxon>Reovirales</taxon>
        <taxon>Sedoreoviridae</taxon>
        <taxon>Rotavirus</taxon>
        <taxon>Rotavirus A</taxon>
    </lineage>
</organism>
<proteinExistence type="inferred from homology"/>
<organismHost>
    <name type="scientific">Homo sapiens</name>
    <name type="common">Human</name>
    <dbReference type="NCBI Taxonomy" id="9606"/>
</organismHost>
<evidence type="ECO:0000255" key="1">
    <source>
        <dbReference type="HAMAP-Rule" id="MF_04089"/>
    </source>
</evidence>
<dbReference type="EC" id="3.6.4.-" evidence="1"/>
<dbReference type="EMBL" id="L04529">
    <property type="protein sequence ID" value="AAA47296.1"/>
    <property type="molecule type" value="Genomic_RNA"/>
</dbReference>
<dbReference type="EMBL" id="EF672580">
    <property type="protein sequence ID" value="ABV53255.1"/>
    <property type="molecule type" value="Genomic_RNA"/>
</dbReference>
<dbReference type="SMR" id="Q03240"/>
<dbReference type="Proteomes" id="UP000001457">
    <property type="component" value="Genome"/>
</dbReference>
<dbReference type="GO" id="GO:0030430">
    <property type="term" value="C:host cell cytoplasm"/>
    <property type="evidence" value="ECO:0007669"/>
    <property type="project" value="UniProtKB-SubCell"/>
</dbReference>
<dbReference type="GO" id="GO:0005524">
    <property type="term" value="F:ATP binding"/>
    <property type="evidence" value="ECO:0007669"/>
    <property type="project" value="UniProtKB-KW"/>
</dbReference>
<dbReference type="GO" id="GO:0046872">
    <property type="term" value="F:metal ion binding"/>
    <property type="evidence" value="ECO:0007669"/>
    <property type="project" value="UniProtKB-UniRule"/>
</dbReference>
<dbReference type="GO" id="GO:0004550">
    <property type="term" value="F:nucleoside diphosphate kinase activity"/>
    <property type="evidence" value="ECO:0007669"/>
    <property type="project" value="InterPro"/>
</dbReference>
<dbReference type="GO" id="GO:0017111">
    <property type="term" value="F:ribonucleoside triphosphate phosphatase activity"/>
    <property type="evidence" value="ECO:0007669"/>
    <property type="project" value="InterPro"/>
</dbReference>
<dbReference type="GO" id="GO:0003723">
    <property type="term" value="F:RNA binding"/>
    <property type="evidence" value="ECO:0007669"/>
    <property type="project" value="UniProtKB-UniRule"/>
</dbReference>
<dbReference type="GO" id="GO:0019079">
    <property type="term" value="P:viral genome replication"/>
    <property type="evidence" value="ECO:0007669"/>
    <property type="project" value="UniProtKB-UniRule"/>
</dbReference>
<dbReference type="Gene3D" id="3.30.428.20">
    <property type="entry name" value="Rotavirus NSP2 fragment, C-terminal domain"/>
    <property type="match status" value="1"/>
</dbReference>
<dbReference type="Gene3D" id="3.90.1400.10">
    <property type="entry name" value="Rotavirus NSP2 fragment, N-terminal domain"/>
    <property type="match status" value="1"/>
</dbReference>
<dbReference type="HAMAP" id="MF_04089">
    <property type="entry name" value="ROTA_NSP2"/>
    <property type="match status" value="1"/>
</dbReference>
<dbReference type="InterPro" id="IPR048306">
    <property type="entry name" value="Rota_NS35_C"/>
</dbReference>
<dbReference type="InterPro" id="IPR048573">
    <property type="entry name" value="Rota_NS35_N"/>
</dbReference>
<dbReference type="InterPro" id="IPR003668">
    <property type="entry name" value="Rotavirus_NSP2"/>
</dbReference>
<dbReference type="InterPro" id="IPR024076">
    <property type="entry name" value="Rotavirus_NSP2_C"/>
</dbReference>
<dbReference type="InterPro" id="IPR024068">
    <property type="entry name" value="Rotavirus_NSP2_N"/>
</dbReference>
<dbReference type="Pfam" id="PF02509">
    <property type="entry name" value="Rota_NS35_C"/>
    <property type="match status" value="1"/>
</dbReference>
<dbReference type="Pfam" id="PF21067">
    <property type="entry name" value="Rota_NS35_N"/>
    <property type="match status" value="1"/>
</dbReference>
<dbReference type="SUPFAM" id="SSF75347">
    <property type="entry name" value="Rotavirus NSP2 fragment, C-terminal domain"/>
    <property type="match status" value="1"/>
</dbReference>
<dbReference type="SUPFAM" id="SSF75574">
    <property type="entry name" value="Rotavirus NSP2 fragment, N-terminal domain"/>
    <property type="match status" value="1"/>
</dbReference>
<accession>Q03240</accession>
<accession>B3SRT0</accession>
<keyword id="KW-0067">ATP-binding</keyword>
<keyword id="KW-1035">Host cytoplasm</keyword>
<keyword id="KW-0378">Hydrolase</keyword>
<keyword id="KW-0460">Magnesium</keyword>
<keyword id="KW-0479">Metal-binding</keyword>
<keyword id="KW-0547">Nucleotide-binding</keyword>
<keyword id="KW-0694">RNA-binding</keyword>
<comment type="function">
    <text evidence="1">Participates in replication and packaging of the viral genome. Plays a crucial role, together with NSP5, in the formation of virus factories (viroplasms), which are large inclusions in the host cytoplasm where replication intermediates are assembled and viral RNA replication takes place. Displays ssRNA binding, NTPase, RNA triphosphatase (RTPase) and ATP-independent helix-unwinding activities. The unwinding activity may prepare and organize plus-strand RNAs for packaging and replication by removing interfering secondary structures. The RTPase activity plays a role in the removal of the gamma-phosphate from the rotavirus RNA minus strands of dsRNA genome segments. Participates in the selective exclusion of host proteins from stress granules (SG) and P bodies (PB). Also participates in the sequestration of these remodeled organelles in viral factories.</text>
</comment>
<comment type="cofactor">
    <cofactor evidence="1">
        <name>Mg(2+)</name>
        <dbReference type="ChEBI" id="CHEBI:18420"/>
    </cofactor>
</comment>
<comment type="subunit">
    <text evidence="1">Homooctamer. Interacts with VP1; this interaction is weak. Interacts with NSP5; this interaction leads to up-regulation of NSP5 phosphorylation and formation of viral factories. Interacts with host DCP1A, DCP1B, DDX6, EDC4 and EIF2S1/eIF2-alpha; these interactions are probably part of the sequestration of some host SGs and PBs proteins in viral factories.</text>
</comment>
<comment type="subcellular location">
    <subcellularLocation>
        <location evidence="1">Host cytoplasm</location>
    </subcellularLocation>
    <text evidence="1">Found in spherical cytoplasmic structures, called viral factories, that appear early after infection and are the site of viral replication and packaging.</text>
</comment>
<comment type="similarity">
    <text evidence="1">Belongs to the rotavirus NSP2 family.</text>
</comment>
<protein>
    <recommendedName>
        <fullName evidence="1">Non-structural protein 2</fullName>
        <shortName evidence="1">NSP2</shortName>
        <ecNumber evidence="1">3.6.4.-</ecNumber>
    </recommendedName>
    <alternativeName>
        <fullName evidence="1">NCVP3</fullName>
    </alternativeName>
    <alternativeName>
        <fullName evidence="1">Non-structural RNA-binding protein 35</fullName>
        <shortName evidence="1">NS35</shortName>
    </alternativeName>
</protein>
<name>NSP2_ROTHD</name>